<accession>Q97RX2</accession>
<protein>
    <recommendedName>
        <fullName evidence="1">UPF0340 protein SP_0663</fullName>
    </recommendedName>
</protein>
<organism>
    <name type="scientific">Streptococcus pneumoniae serotype 4 (strain ATCC BAA-334 / TIGR4)</name>
    <dbReference type="NCBI Taxonomy" id="170187"/>
    <lineage>
        <taxon>Bacteria</taxon>
        <taxon>Bacillati</taxon>
        <taxon>Bacillota</taxon>
        <taxon>Bacilli</taxon>
        <taxon>Lactobacillales</taxon>
        <taxon>Streptococcaceae</taxon>
        <taxon>Streptococcus</taxon>
    </lineage>
</organism>
<sequence length="187" mass="20319">MNETQIQRETRQVVEDVLEKTNLKQGALFVLGLSSSEVLGGHIGKESSQEIGELIVETILDILGSRGIHLAVQGCEHVNRALVVERQVAEQFGLEIVSVHPTLHAGGSGQLAAFKFMQDPVEVEFIKAHAGLDIGDTAIGMHVKHVQVPIRPILREIGHAHVTALASRPKLIGGARAHYPQDAIRKF</sequence>
<feature type="chain" id="PRO_0000213025" description="UPF0340 protein SP_0663">
    <location>
        <begin position="1"/>
        <end position="187"/>
    </location>
</feature>
<comment type="similarity">
    <text evidence="1">Belongs to the UPF0340 family.</text>
</comment>
<evidence type="ECO:0000255" key="1">
    <source>
        <dbReference type="HAMAP-Rule" id="MF_00800"/>
    </source>
</evidence>
<reference key="1">
    <citation type="journal article" date="2001" name="Science">
        <title>Complete genome sequence of a virulent isolate of Streptococcus pneumoniae.</title>
        <authorList>
            <person name="Tettelin H."/>
            <person name="Nelson K.E."/>
            <person name="Paulsen I.T."/>
            <person name="Eisen J.A."/>
            <person name="Read T.D."/>
            <person name="Peterson S.N."/>
            <person name="Heidelberg J.F."/>
            <person name="DeBoy R.T."/>
            <person name="Haft D.H."/>
            <person name="Dodson R.J."/>
            <person name="Durkin A.S."/>
            <person name="Gwinn M.L."/>
            <person name="Kolonay J.F."/>
            <person name="Nelson W.C."/>
            <person name="Peterson J.D."/>
            <person name="Umayam L.A."/>
            <person name="White O."/>
            <person name="Salzberg S.L."/>
            <person name="Lewis M.R."/>
            <person name="Radune D."/>
            <person name="Holtzapple E.K."/>
            <person name="Khouri H.M."/>
            <person name="Wolf A.M."/>
            <person name="Utterback T.R."/>
            <person name="Hansen C.L."/>
            <person name="McDonald L.A."/>
            <person name="Feldblyum T.V."/>
            <person name="Angiuoli S.V."/>
            <person name="Dickinson T."/>
            <person name="Hickey E.K."/>
            <person name="Holt I.E."/>
            <person name="Loftus B.J."/>
            <person name="Yang F."/>
            <person name="Smith H.O."/>
            <person name="Venter J.C."/>
            <person name="Dougherty B.A."/>
            <person name="Morrison D.A."/>
            <person name="Hollingshead S.K."/>
            <person name="Fraser C.M."/>
        </authorList>
    </citation>
    <scope>NUCLEOTIDE SEQUENCE [LARGE SCALE GENOMIC DNA]</scope>
    <source>
        <strain>ATCC BAA-334 / TIGR4</strain>
    </source>
</reference>
<dbReference type="EMBL" id="AE005672">
    <property type="protein sequence ID" value="AAK74808.1"/>
    <property type="molecule type" value="Genomic_DNA"/>
</dbReference>
<dbReference type="PIR" id="G95076">
    <property type="entry name" value="G95076"/>
</dbReference>
<dbReference type="RefSeq" id="WP_001006361.1">
    <property type="nucleotide sequence ID" value="NZ_CP155539.1"/>
</dbReference>
<dbReference type="SMR" id="Q97RX2"/>
<dbReference type="IntAct" id="Q97RX2">
    <property type="interactions" value="1"/>
</dbReference>
<dbReference type="PaxDb" id="170187-SP_0663"/>
<dbReference type="EnsemblBacteria" id="AAK74808">
    <property type="protein sequence ID" value="AAK74808"/>
    <property type="gene ID" value="SP_0663"/>
</dbReference>
<dbReference type="KEGG" id="spn:SP_0663"/>
<dbReference type="eggNOG" id="COG4475">
    <property type="taxonomic scope" value="Bacteria"/>
</dbReference>
<dbReference type="PhylomeDB" id="Q97RX2"/>
<dbReference type="Proteomes" id="UP000000585">
    <property type="component" value="Chromosome"/>
</dbReference>
<dbReference type="Gene3D" id="3.40.50.10360">
    <property type="entry name" value="Hypothetical protein TT1679"/>
    <property type="match status" value="1"/>
</dbReference>
<dbReference type="HAMAP" id="MF_00800">
    <property type="entry name" value="UPF0340"/>
    <property type="match status" value="1"/>
</dbReference>
<dbReference type="InterPro" id="IPR028345">
    <property type="entry name" value="Antibiotic_NAT-like"/>
</dbReference>
<dbReference type="InterPro" id="IPR006340">
    <property type="entry name" value="DUF436"/>
</dbReference>
<dbReference type="NCBIfam" id="TIGR01440">
    <property type="entry name" value="TIGR01440 family protein"/>
    <property type="match status" value="1"/>
</dbReference>
<dbReference type="Pfam" id="PF04260">
    <property type="entry name" value="DUF436"/>
    <property type="match status" value="1"/>
</dbReference>
<dbReference type="PIRSF" id="PIRSF007510">
    <property type="entry name" value="UCP007510"/>
    <property type="match status" value="1"/>
</dbReference>
<dbReference type="SUPFAM" id="SSF110710">
    <property type="entry name" value="TTHA0583/YokD-like"/>
    <property type="match status" value="1"/>
</dbReference>
<name>Y663_STRPN</name>
<keyword id="KW-1185">Reference proteome</keyword>
<proteinExistence type="inferred from homology"/>
<gene>
    <name type="ordered locus">SP_0663</name>
</gene>